<reference key="1">
    <citation type="submission" date="2006-10" db="EMBL/GenBank/DDBJ databases">
        <authorList>
            <consortium name="Sanger Xenopus tropicalis EST/cDNA project"/>
        </authorList>
    </citation>
    <scope>NUCLEOTIDE SEQUENCE [LARGE SCALE MRNA]</scope>
    <source>
        <tissue>Egg</tissue>
    </source>
</reference>
<reference key="2">
    <citation type="submission" date="2004-06" db="EMBL/GenBank/DDBJ databases">
        <authorList>
            <consortium name="NIH - Xenopus Gene Collection (XGC) project"/>
        </authorList>
    </citation>
    <scope>NUCLEOTIDE SEQUENCE [LARGE SCALE MRNA]</scope>
    <source>
        <tissue>Embryo</tissue>
    </source>
</reference>
<gene>
    <name type="primary">med31</name>
    <name type="synonym">soh1</name>
    <name type="ORF">TEgg024a05.1</name>
</gene>
<keyword id="KW-0010">Activator</keyword>
<keyword id="KW-0539">Nucleus</keyword>
<keyword id="KW-1185">Reference proteome</keyword>
<keyword id="KW-0804">Transcription</keyword>
<keyword id="KW-0805">Transcription regulation</keyword>
<name>MED31_XENTR</name>
<accession>Q28FE2</accession>
<accession>Q6GL95</accession>
<organism>
    <name type="scientific">Xenopus tropicalis</name>
    <name type="common">Western clawed frog</name>
    <name type="synonym">Silurana tropicalis</name>
    <dbReference type="NCBI Taxonomy" id="8364"/>
    <lineage>
        <taxon>Eukaryota</taxon>
        <taxon>Metazoa</taxon>
        <taxon>Chordata</taxon>
        <taxon>Craniata</taxon>
        <taxon>Vertebrata</taxon>
        <taxon>Euteleostomi</taxon>
        <taxon>Amphibia</taxon>
        <taxon>Batrachia</taxon>
        <taxon>Anura</taxon>
        <taxon>Pipoidea</taxon>
        <taxon>Pipidae</taxon>
        <taxon>Xenopodinae</taxon>
        <taxon>Xenopus</taxon>
        <taxon>Silurana</taxon>
    </lineage>
</organism>
<feature type="chain" id="PRO_0000305711" description="Mediator of RNA polymerase II transcription subunit 31">
    <location>
        <begin position="1"/>
        <end position="128"/>
    </location>
</feature>
<feature type="sequence conflict" description="In Ref. 2; AAH74608." evidence="2" ref="2">
    <original>E</original>
    <variation>D</variation>
    <location>
        <position position="59"/>
    </location>
</feature>
<proteinExistence type="evidence at transcript level"/>
<protein>
    <recommendedName>
        <fullName>Mediator of RNA polymerase II transcription subunit 31</fullName>
    </recommendedName>
    <alternativeName>
        <fullName>Mediator complex subunit 31</fullName>
    </alternativeName>
    <alternativeName>
        <fullName>Mediator complex subunit soh1</fullName>
    </alternativeName>
</protein>
<sequence length="128" mass="15697">MAAAMETDEQQRIRFQLELEFVQCLANPNYLNFLAQRGYFKDKSFVNYLKYLLYWKDPEYAKYLKYPQCLHMLELLQYEHFRKELVNAQCAKFIDEQQILHWQHYSRKRMRMQQALAEQQQQNNTSGK</sequence>
<evidence type="ECO:0000250" key="1"/>
<evidence type="ECO:0000305" key="2"/>
<comment type="function">
    <text evidence="1">Component of the Mediator complex, a coactivator involved in the regulated transcription of nearly all RNA polymerase II-dependent genes. Mediator functions as a bridge to convey information from gene-specific regulatory proteins to the basal RNA polymerase II transcription machinery. Mediator is recruited to promoters by direct interactions with regulatory proteins and serves as a scaffold for the assembly of a functional preinitiation complex with RNA polymerase II and the general transcription factors (By similarity).</text>
</comment>
<comment type="subunit">
    <text evidence="1">Component of the Mediator complex.</text>
</comment>
<comment type="subcellular location">
    <subcellularLocation>
        <location evidence="2">Nucleus</location>
    </subcellularLocation>
</comment>
<comment type="similarity">
    <text evidence="2">Belongs to the Mediator complex subunit 31 family.</text>
</comment>
<comment type="sequence caution" evidence="2">
    <conflict type="erroneous initiation">
        <sequence resource="EMBL-CDS" id="AAH74608"/>
    </conflict>
</comment>
<comment type="sequence caution" evidence="2">
    <conflict type="erroneous initiation">
        <sequence resource="EMBL-CDS" id="CAJ81967"/>
    </conflict>
</comment>
<dbReference type="EMBL" id="CR762011">
    <property type="protein sequence ID" value="CAJ81967.1"/>
    <property type="status" value="ALT_INIT"/>
    <property type="molecule type" value="mRNA"/>
</dbReference>
<dbReference type="EMBL" id="BC074608">
    <property type="protein sequence ID" value="AAH74608.1"/>
    <property type="status" value="ALT_INIT"/>
    <property type="molecule type" value="mRNA"/>
</dbReference>
<dbReference type="RefSeq" id="NP_001004826.2">
    <property type="nucleotide sequence ID" value="NM_001004826.2"/>
</dbReference>
<dbReference type="RefSeq" id="NP_001231694.1">
    <property type="nucleotide sequence ID" value="NM_001244765.1"/>
</dbReference>
<dbReference type="SMR" id="Q28FE2"/>
<dbReference type="FunCoup" id="Q28FE2">
    <property type="interactions" value="2859"/>
</dbReference>
<dbReference type="STRING" id="8364.ENSXETP00000037092"/>
<dbReference type="PaxDb" id="8364-ENSXETP00000038255"/>
<dbReference type="DNASU" id="448081"/>
<dbReference type="GeneID" id="448081"/>
<dbReference type="KEGG" id="xtr:448081"/>
<dbReference type="AGR" id="Xenbase:XB-GENE-951034"/>
<dbReference type="CTD" id="51003"/>
<dbReference type="Xenbase" id="XB-GENE-951034">
    <property type="gene designation" value="med31"/>
</dbReference>
<dbReference type="eggNOG" id="KOG4086">
    <property type="taxonomic scope" value="Eukaryota"/>
</dbReference>
<dbReference type="HOGENOM" id="CLU_071681_5_1_1"/>
<dbReference type="InParanoid" id="Q28FE2"/>
<dbReference type="OMA" id="AQFIDDQ"/>
<dbReference type="OrthoDB" id="10257739at2759"/>
<dbReference type="Proteomes" id="UP000008143">
    <property type="component" value="Chromosome 2"/>
</dbReference>
<dbReference type="Bgee" id="ENSXETG00000017618">
    <property type="expression patterns" value="Expressed in egg cell and 14 other cell types or tissues"/>
</dbReference>
<dbReference type="ExpressionAtlas" id="Q28FE2">
    <property type="expression patterns" value="baseline and differential"/>
</dbReference>
<dbReference type="GO" id="GO:0016592">
    <property type="term" value="C:mediator complex"/>
    <property type="evidence" value="ECO:0007669"/>
    <property type="project" value="InterPro"/>
</dbReference>
<dbReference type="GO" id="GO:0003712">
    <property type="term" value="F:transcription coregulator activity"/>
    <property type="evidence" value="ECO:0007669"/>
    <property type="project" value="InterPro"/>
</dbReference>
<dbReference type="GO" id="GO:0006355">
    <property type="term" value="P:regulation of DNA-templated transcription"/>
    <property type="evidence" value="ECO:0007669"/>
    <property type="project" value="InterPro"/>
</dbReference>
<dbReference type="FunFam" id="1.10.10.1340:FF:000001">
    <property type="entry name" value="Mediator of RNA polymerase II transcription subunit 31"/>
    <property type="match status" value="1"/>
</dbReference>
<dbReference type="Gene3D" id="1.10.10.1340">
    <property type="entry name" value="Mediator of RNA polymerase II, submodule Med31 (Soh1)"/>
    <property type="match status" value="1"/>
</dbReference>
<dbReference type="InterPro" id="IPR038089">
    <property type="entry name" value="Med31_sf"/>
</dbReference>
<dbReference type="InterPro" id="IPR008831">
    <property type="entry name" value="Mediator_Med31"/>
</dbReference>
<dbReference type="PANTHER" id="PTHR13186">
    <property type="entry name" value="MEDIATOR OF RNA POLYMERASE II TRANSCRIPTION SUBUNIT 31"/>
    <property type="match status" value="1"/>
</dbReference>
<dbReference type="Pfam" id="PF05669">
    <property type="entry name" value="Med31"/>
    <property type="match status" value="1"/>
</dbReference>